<proteinExistence type="inferred from homology"/>
<evidence type="ECO:0000255" key="1">
    <source>
        <dbReference type="HAMAP-Rule" id="MF_00451"/>
    </source>
</evidence>
<keyword id="KW-0067">ATP-binding</keyword>
<keyword id="KW-0963">Cytoplasm</keyword>
<keyword id="KW-0418">Kinase</keyword>
<keyword id="KW-0460">Magnesium</keyword>
<keyword id="KW-0479">Metal-binding</keyword>
<keyword id="KW-0546">Nucleotide metabolism</keyword>
<keyword id="KW-0547">Nucleotide-binding</keyword>
<keyword id="KW-0597">Phosphoprotein</keyword>
<keyword id="KW-0808">Transferase</keyword>
<feature type="chain" id="PRO_1000080966" description="Nucleoside diphosphate kinase">
    <location>
        <begin position="1"/>
        <end position="141"/>
    </location>
</feature>
<feature type="active site" description="Pros-phosphohistidine intermediate" evidence="1">
    <location>
        <position position="117"/>
    </location>
</feature>
<feature type="binding site" evidence="1">
    <location>
        <position position="11"/>
    </location>
    <ligand>
        <name>ATP</name>
        <dbReference type="ChEBI" id="CHEBI:30616"/>
    </ligand>
</feature>
<feature type="binding site" evidence="1">
    <location>
        <position position="59"/>
    </location>
    <ligand>
        <name>ATP</name>
        <dbReference type="ChEBI" id="CHEBI:30616"/>
    </ligand>
</feature>
<feature type="binding site" evidence="1">
    <location>
        <position position="87"/>
    </location>
    <ligand>
        <name>ATP</name>
        <dbReference type="ChEBI" id="CHEBI:30616"/>
    </ligand>
</feature>
<feature type="binding site" evidence="1">
    <location>
        <position position="93"/>
    </location>
    <ligand>
        <name>ATP</name>
        <dbReference type="ChEBI" id="CHEBI:30616"/>
    </ligand>
</feature>
<feature type="binding site" evidence="1">
    <location>
        <position position="104"/>
    </location>
    <ligand>
        <name>ATP</name>
        <dbReference type="ChEBI" id="CHEBI:30616"/>
    </ligand>
</feature>
<feature type="binding site" evidence="1">
    <location>
        <position position="114"/>
    </location>
    <ligand>
        <name>ATP</name>
        <dbReference type="ChEBI" id="CHEBI:30616"/>
    </ligand>
</feature>
<organism>
    <name type="scientific">Histophilus somni (strain 2336)</name>
    <name type="common">Haemophilus somnus</name>
    <dbReference type="NCBI Taxonomy" id="228400"/>
    <lineage>
        <taxon>Bacteria</taxon>
        <taxon>Pseudomonadati</taxon>
        <taxon>Pseudomonadota</taxon>
        <taxon>Gammaproteobacteria</taxon>
        <taxon>Pasteurellales</taxon>
        <taxon>Pasteurellaceae</taxon>
        <taxon>Histophilus</taxon>
    </lineage>
</organism>
<protein>
    <recommendedName>
        <fullName evidence="1">Nucleoside diphosphate kinase</fullName>
        <shortName evidence="1">NDK</shortName>
        <shortName evidence="1">NDP kinase</shortName>
        <ecNumber evidence="1">2.7.4.6</ecNumber>
    </recommendedName>
    <alternativeName>
        <fullName evidence="1">Nucleoside-2-P kinase</fullName>
    </alternativeName>
</protein>
<reference key="1">
    <citation type="submission" date="2008-02" db="EMBL/GenBank/DDBJ databases">
        <title>Complete sequence of Haemophilus somnus 2336.</title>
        <authorList>
            <consortium name="US DOE Joint Genome Institute"/>
            <person name="Siddaramappa S."/>
            <person name="Duncan A.J."/>
            <person name="Challacombe J.F."/>
            <person name="Rainey D."/>
            <person name="Gillaspy A.F."/>
            <person name="Carson M."/>
            <person name="Gipson J."/>
            <person name="Gipson M."/>
            <person name="Bruce D."/>
            <person name="Detter J.C."/>
            <person name="Han C.S."/>
            <person name="Land M."/>
            <person name="Tapia R."/>
            <person name="Thompson L.S."/>
            <person name="Orvis J."/>
            <person name="Zaitshik J."/>
            <person name="Barnes G."/>
            <person name="Brettin T.S."/>
            <person name="Dyer D.W."/>
            <person name="Inzana T.J."/>
        </authorList>
    </citation>
    <scope>NUCLEOTIDE SEQUENCE [LARGE SCALE GENOMIC DNA]</scope>
    <source>
        <strain>2336</strain>
    </source>
</reference>
<sequence>MTLEQTLAIIKPDAVERNLIGNIISRLEDKGFQIIAMKMLHLNQEQAEGFYAEHRNKAFFTELVKYMTSAPIVVLVLQKENAVKDYRTFMGTTNPEIAENGTLRYEFAINQTQNSVHGSDSLENAQREIAYFFAEAEIYAR</sequence>
<accession>B0USF1</accession>
<gene>
    <name evidence="1" type="primary">ndk</name>
    <name type="ordered locus">HSM_0712</name>
</gene>
<comment type="function">
    <text evidence="1">Major role in the synthesis of nucleoside triphosphates other than ATP. The ATP gamma phosphate is transferred to the NDP beta phosphate via a ping-pong mechanism, using a phosphorylated active-site intermediate.</text>
</comment>
<comment type="catalytic activity">
    <reaction evidence="1">
        <text>a 2'-deoxyribonucleoside 5'-diphosphate + ATP = a 2'-deoxyribonucleoside 5'-triphosphate + ADP</text>
        <dbReference type="Rhea" id="RHEA:44640"/>
        <dbReference type="ChEBI" id="CHEBI:30616"/>
        <dbReference type="ChEBI" id="CHEBI:61560"/>
        <dbReference type="ChEBI" id="CHEBI:73316"/>
        <dbReference type="ChEBI" id="CHEBI:456216"/>
        <dbReference type="EC" id="2.7.4.6"/>
    </reaction>
</comment>
<comment type="catalytic activity">
    <reaction evidence="1">
        <text>a ribonucleoside 5'-diphosphate + ATP = a ribonucleoside 5'-triphosphate + ADP</text>
        <dbReference type="Rhea" id="RHEA:18113"/>
        <dbReference type="ChEBI" id="CHEBI:30616"/>
        <dbReference type="ChEBI" id="CHEBI:57930"/>
        <dbReference type="ChEBI" id="CHEBI:61557"/>
        <dbReference type="ChEBI" id="CHEBI:456216"/>
        <dbReference type="EC" id="2.7.4.6"/>
    </reaction>
</comment>
<comment type="cofactor">
    <cofactor evidence="1">
        <name>Mg(2+)</name>
        <dbReference type="ChEBI" id="CHEBI:18420"/>
    </cofactor>
</comment>
<comment type="subunit">
    <text evidence="1">Homotetramer.</text>
</comment>
<comment type="subcellular location">
    <subcellularLocation>
        <location evidence="1">Cytoplasm</location>
    </subcellularLocation>
</comment>
<comment type="similarity">
    <text evidence="1">Belongs to the NDK family.</text>
</comment>
<name>NDK_HISS2</name>
<dbReference type="EC" id="2.7.4.6" evidence="1"/>
<dbReference type="EMBL" id="CP000947">
    <property type="protein sequence ID" value="ACA32377.1"/>
    <property type="molecule type" value="Genomic_DNA"/>
</dbReference>
<dbReference type="RefSeq" id="WP_012341541.1">
    <property type="nucleotide sequence ID" value="NC_010519.1"/>
</dbReference>
<dbReference type="SMR" id="B0USF1"/>
<dbReference type="STRING" id="228400.HSM_0712"/>
<dbReference type="GeneID" id="31486998"/>
<dbReference type="KEGG" id="hsm:HSM_0712"/>
<dbReference type="HOGENOM" id="CLU_060216_8_1_6"/>
<dbReference type="GO" id="GO:0005737">
    <property type="term" value="C:cytoplasm"/>
    <property type="evidence" value="ECO:0007669"/>
    <property type="project" value="UniProtKB-SubCell"/>
</dbReference>
<dbReference type="GO" id="GO:0005524">
    <property type="term" value="F:ATP binding"/>
    <property type="evidence" value="ECO:0007669"/>
    <property type="project" value="UniProtKB-UniRule"/>
</dbReference>
<dbReference type="GO" id="GO:0046872">
    <property type="term" value="F:metal ion binding"/>
    <property type="evidence" value="ECO:0007669"/>
    <property type="project" value="UniProtKB-KW"/>
</dbReference>
<dbReference type="GO" id="GO:0004550">
    <property type="term" value="F:nucleoside diphosphate kinase activity"/>
    <property type="evidence" value="ECO:0007669"/>
    <property type="project" value="UniProtKB-UniRule"/>
</dbReference>
<dbReference type="GO" id="GO:0006241">
    <property type="term" value="P:CTP biosynthetic process"/>
    <property type="evidence" value="ECO:0007669"/>
    <property type="project" value="UniProtKB-UniRule"/>
</dbReference>
<dbReference type="GO" id="GO:0006183">
    <property type="term" value="P:GTP biosynthetic process"/>
    <property type="evidence" value="ECO:0007669"/>
    <property type="project" value="UniProtKB-UniRule"/>
</dbReference>
<dbReference type="GO" id="GO:0006228">
    <property type="term" value="P:UTP biosynthetic process"/>
    <property type="evidence" value="ECO:0007669"/>
    <property type="project" value="UniProtKB-UniRule"/>
</dbReference>
<dbReference type="CDD" id="cd04413">
    <property type="entry name" value="NDPk_I"/>
    <property type="match status" value="1"/>
</dbReference>
<dbReference type="FunFam" id="3.30.70.141:FF:000003">
    <property type="entry name" value="Nucleoside diphosphate kinase"/>
    <property type="match status" value="1"/>
</dbReference>
<dbReference type="Gene3D" id="3.30.70.141">
    <property type="entry name" value="Nucleoside diphosphate kinase-like domain"/>
    <property type="match status" value="1"/>
</dbReference>
<dbReference type="HAMAP" id="MF_00451">
    <property type="entry name" value="NDP_kinase"/>
    <property type="match status" value="1"/>
</dbReference>
<dbReference type="InterPro" id="IPR034907">
    <property type="entry name" value="NDK-like_dom"/>
</dbReference>
<dbReference type="InterPro" id="IPR036850">
    <property type="entry name" value="NDK-like_dom_sf"/>
</dbReference>
<dbReference type="InterPro" id="IPR001564">
    <property type="entry name" value="Nucleoside_diP_kinase"/>
</dbReference>
<dbReference type="InterPro" id="IPR023005">
    <property type="entry name" value="Nucleoside_diP_kinase_AS"/>
</dbReference>
<dbReference type="NCBIfam" id="NF001908">
    <property type="entry name" value="PRK00668.1"/>
    <property type="match status" value="1"/>
</dbReference>
<dbReference type="PANTHER" id="PTHR46161">
    <property type="entry name" value="NUCLEOSIDE DIPHOSPHATE KINASE"/>
    <property type="match status" value="1"/>
</dbReference>
<dbReference type="PANTHER" id="PTHR46161:SF3">
    <property type="entry name" value="NUCLEOSIDE DIPHOSPHATE KINASE DDB_G0292928-RELATED"/>
    <property type="match status" value="1"/>
</dbReference>
<dbReference type="Pfam" id="PF00334">
    <property type="entry name" value="NDK"/>
    <property type="match status" value="1"/>
</dbReference>
<dbReference type="PRINTS" id="PR01243">
    <property type="entry name" value="NUCDPKINASE"/>
</dbReference>
<dbReference type="SMART" id="SM00562">
    <property type="entry name" value="NDK"/>
    <property type="match status" value="1"/>
</dbReference>
<dbReference type="SUPFAM" id="SSF54919">
    <property type="entry name" value="Nucleoside diphosphate kinase, NDK"/>
    <property type="match status" value="1"/>
</dbReference>
<dbReference type="PROSITE" id="PS00469">
    <property type="entry name" value="NDPK"/>
    <property type="match status" value="1"/>
</dbReference>
<dbReference type="PROSITE" id="PS51374">
    <property type="entry name" value="NDPK_LIKE"/>
    <property type="match status" value="1"/>
</dbReference>